<dbReference type="EMBL" id="M28296">
    <property type="protein sequence ID" value="AAA24809.1"/>
    <property type="molecule type" value="Genomic_DNA"/>
</dbReference>
<dbReference type="SMR" id="Q47490"/>
<dbReference type="eggNOG" id="COG3203">
    <property type="taxonomic scope" value="Bacteria"/>
</dbReference>
<dbReference type="GO" id="GO:0009279">
    <property type="term" value="C:cell outer membrane"/>
    <property type="evidence" value="ECO:0007669"/>
    <property type="project" value="UniProtKB-SubCell"/>
</dbReference>
<dbReference type="GO" id="GO:0046930">
    <property type="term" value="C:pore complex"/>
    <property type="evidence" value="ECO:0007669"/>
    <property type="project" value="UniProtKB-KW"/>
</dbReference>
<dbReference type="GO" id="GO:0015288">
    <property type="term" value="F:porin activity"/>
    <property type="evidence" value="ECO:0007669"/>
    <property type="project" value="UniProtKB-KW"/>
</dbReference>
<dbReference type="GO" id="GO:0034220">
    <property type="term" value="P:monoatomic ion transmembrane transport"/>
    <property type="evidence" value="ECO:0007669"/>
    <property type="project" value="InterPro"/>
</dbReference>
<dbReference type="CDD" id="cd00342">
    <property type="entry name" value="gram_neg_porins"/>
    <property type="match status" value="1"/>
</dbReference>
<dbReference type="FunFam" id="2.40.160.10:FF:000002">
    <property type="entry name" value="Outer membrane porin F"/>
    <property type="match status" value="1"/>
</dbReference>
<dbReference type="Gene3D" id="2.40.160.10">
    <property type="entry name" value="Porin"/>
    <property type="match status" value="1"/>
</dbReference>
<dbReference type="InterPro" id="IPR050298">
    <property type="entry name" value="Gram-neg_bact_OMP"/>
</dbReference>
<dbReference type="InterPro" id="IPR033900">
    <property type="entry name" value="Gram_neg_porin_domain"/>
</dbReference>
<dbReference type="InterPro" id="IPR023614">
    <property type="entry name" value="Porin_dom_sf"/>
</dbReference>
<dbReference type="InterPro" id="IPR001897">
    <property type="entry name" value="Porin_gammaproteobac"/>
</dbReference>
<dbReference type="InterPro" id="IPR001702">
    <property type="entry name" value="Porin_Gram-ve"/>
</dbReference>
<dbReference type="InterPro" id="IPR013793">
    <property type="entry name" value="Porin_Gram-ve_CS"/>
</dbReference>
<dbReference type="NCBIfam" id="NF007544">
    <property type="entry name" value="PRK10159.1"/>
    <property type="match status" value="1"/>
</dbReference>
<dbReference type="PANTHER" id="PTHR34501:SF5">
    <property type="entry name" value="OUTER MEMBRANE PORIN PHOE"/>
    <property type="match status" value="1"/>
</dbReference>
<dbReference type="PANTHER" id="PTHR34501">
    <property type="entry name" value="PROTEIN YDDL-RELATED"/>
    <property type="match status" value="1"/>
</dbReference>
<dbReference type="Pfam" id="PF00267">
    <property type="entry name" value="Porin_1"/>
    <property type="match status" value="1"/>
</dbReference>
<dbReference type="PRINTS" id="PR00183">
    <property type="entry name" value="ECOLIPORIN"/>
</dbReference>
<dbReference type="PRINTS" id="PR00182">
    <property type="entry name" value="ECOLNEIPORIN"/>
</dbReference>
<dbReference type="SUPFAM" id="SSF56935">
    <property type="entry name" value="Porins"/>
    <property type="match status" value="1"/>
</dbReference>
<dbReference type="PROSITE" id="PS00576">
    <property type="entry name" value="GRAM_NEG_PORIN"/>
    <property type="match status" value="1"/>
</dbReference>
<accession>Q47490</accession>
<comment type="function">
    <text>Uptake of inorganic phosphate, phosphorylated compounds, and some other negatively charged solutes.</text>
</comment>
<comment type="subunit">
    <text>Homotrimer.</text>
</comment>
<comment type="subcellular location">
    <subcellularLocation>
        <location>Cell outer membrane</location>
        <topology>Multi-pass membrane protein</topology>
    </subcellularLocation>
</comment>
<comment type="induction">
    <text>By phosphate starvation.</text>
</comment>
<comment type="similarity">
    <text evidence="2">Belongs to the Gram-negative porin family.</text>
</comment>
<organism>
    <name type="scientific">Enterobacter cloacae</name>
    <dbReference type="NCBI Taxonomy" id="550"/>
    <lineage>
        <taxon>Bacteria</taxon>
        <taxon>Pseudomonadati</taxon>
        <taxon>Pseudomonadota</taxon>
        <taxon>Gammaproteobacteria</taxon>
        <taxon>Enterobacterales</taxon>
        <taxon>Enterobacteriaceae</taxon>
        <taxon>Enterobacter</taxon>
        <taxon>Enterobacter cloacae complex</taxon>
    </lineage>
</organism>
<reference key="1">
    <citation type="journal article" date="1987" name="Eur. J. Biochem.">
        <title>A comparative study on the phoE genes of three enterobacterial species. Implications for structure-function relationships in a pore-forming protein of the outer membrane.</title>
        <authorList>
            <person name="van der Ley P."/>
            <person name="Bekkers A."/>
            <person name="van Meersbergen J."/>
            <person name="Tommassen J."/>
        </authorList>
    </citation>
    <scope>NUCLEOTIDE SEQUENCE [GENOMIC DNA]</scope>
</reference>
<name>PHOE_ENTCL</name>
<evidence type="ECO:0000250" key="1"/>
<evidence type="ECO:0000305" key="2"/>
<proteinExistence type="evidence at transcript level"/>
<gene>
    <name type="primary">phoE</name>
</gene>
<protein>
    <recommendedName>
        <fullName>Outer membrane porin PhoE</fullName>
    </recommendedName>
    <alternativeName>
        <fullName>Outer membrane pore protein E</fullName>
    </alternativeName>
</protein>
<feature type="signal peptide" evidence="1">
    <location>
        <begin position="1"/>
        <end position="21"/>
    </location>
</feature>
<feature type="chain" id="PRO_0000025243" description="Outer membrane porin PhoE">
    <location>
        <begin position="22"/>
        <end position="350"/>
    </location>
</feature>
<keyword id="KW-0998">Cell outer membrane</keyword>
<keyword id="KW-0406">Ion transport</keyword>
<keyword id="KW-0472">Membrane</keyword>
<keyword id="KW-0626">Porin</keyword>
<keyword id="KW-0732">Signal</keyword>
<keyword id="KW-0346">Stress response</keyword>
<keyword id="KW-0812">Transmembrane</keyword>
<keyword id="KW-1134">Transmembrane beta strand</keyword>
<keyword id="KW-0813">Transport</keyword>
<sequence>MKKSTLALVVMGVVASASVHAAEVYNKNGNKLDVYGKVKAMHYISDDDTKDGDQTYVRFGFKGETQINDQLTGYGRWEAEFAGNKAESDSSQKTRLAFAGLKLKDFGSLDYGRNLGALYDVEAWTDMFPEFGGDSSAQTDNFMTKRASGLATYRNTDFFGAIDGLDMTLQYQGKNENRDAKKQNGDGFGTSLTYDFGGTDFAVSGAYTNSDRTNAQNLLARAQGQKAEAWATGLKYDANDIYLAAMYSETRNMTPISGGFANKAQNFEVVAQYQFDFGLRPSLGYVQSKGKDNEGIGDEDLVKYIDVGATYYFNKNMSAFVDYKINQIDDDNKLGVSSDDIVAVGMTYQF</sequence>